<geneLocation type="chloroplast"/>
<evidence type="ECO:0000255" key="1">
    <source>
        <dbReference type="HAMAP-Rule" id="MF_01305"/>
    </source>
</evidence>
<gene>
    <name evidence="1" type="primary">psbJ</name>
</gene>
<dbReference type="EMBL" id="DQ630521">
    <property type="protein sequence ID" value="ABF60174.1"/>
    <property type="molecule type" value="Genomic_DNA"/>
</dbReference>
<dbReference type="RefSeq" id="YP_764431.1">
    <property type="nucleotide sequence ID" value="NC_008372.1"/>
</dbReference>
<dbReference type="SMR" id="Q06SD5"/>
<dbReference type="GeneID" id="4308417"/>
<dbReference type="GO" id="GO:0009535">
    <property type="term" value="C:chloroplast thylakoid membrane"/>
    <property type="evidence" value="ECO:0007669"/>
    <property type="project" value="UniProtKB-SubCell"/>
</dbReference>
<dbReference type="GO" id="GO:0009539">
    <property type="term" value="C:photosystem II reaction center"/>
    <property type="evidence" value="ECO:0007669"/>
    <property type="project" value="InterPro"/>
</dbReference>
<dbReference type="GO" id="GO:0015979">
    <property type="term" value="P:photosynthesis"/>
    <property type="evidence" value="ECO:0007669"/>
    <property type="project" value="UniProtKB-UniRule"/>
</dbReference>
<dbReference type="Gene3D" id="6.10.250.2070">
    <property type="match status" value="1"/>
</dbReference>
<dbReference type="HAMAP" id="MF_01305">
    <property type="entry name" value="PSII_PsbJ"/>
    <property type="match status" value="1"/>
</dbReference>
<dbReference type="InterPro" id="IPR002682">
    <property type="entry name" value="PSII_PsbJ"/>
</dbReference>
<dbReference type="InterPro" id="IPR037267">
    <property type="entry name" value="PSII_PsbJ_sf"/>
</dbReference>
<dbReference type="PANTHER" id="PTHR34812">
    <property type="entry name" value="PHOTOSYSTEM II REACTION CENTER PROTEIN J"/>
    <property type="match status" value="1"/>
</dbReference>
<dbReference type="PANTHER" id="PTHR34812:SF3">
    <property type="entry name" value="PHOTOSYSTEM II REACTION CENTER PROTEIN J"/>
    <property type="match status" value="1"/>
</dbReference>
<dbReference type="Pfam" id="PF01788">
    <property type="entry name" value="PsbJ"/>
    <property type="match status" value="1"/>
</dbReference>
<dbReference type="SUPFAM" id="SSF161021">
    <property type="entry name" value="Photosystem II reaction center protein J, PsbJ"/>
    <property type="match status" value="1"/>
</dbReference>
<name>PSBJ_STIHE</name>
<reference key="1">
    <citation type="journal article" date="2006" name="Mol. Genet. Genomics">
        <title>Distinctive architecture of the chloroplast genome in the chlorophycean green alga Stigeoclonium helveticum.</title>
        <authorList>
            <person name="Belanger A.-S."/>
            <person name="Brouard J.-S."/>
            <person name="Charlebois P."/>
            <person name="Otis C."/>
            <person name="Lemieux C."/>
            <person name="Turmel M."/>
        </authorList>
    </citation>
    <scope>NUCLEOTIDE SEQUENCE [LARGE SCALE GENOMIC DNA]</scope>
    <source>
        <strain>UTEX 441</strain>
    </source>
</reference>
<comment type="function">
    <text evidence="1">One of the components of the core complex of photosystem II (PSII). PSII is a light-driven water:plastoquinone oxidoreductase that uses light energy to abstract electrons from H(2)O, generating O(2) and a proton gradient subsequently used for ATP formation. It consists of a core antenna complex that captures photons, and an electron transfer chain that converts photonic excitation into a charge separation.</text>
</comment>
<comment type="subunit">
    <text evidence="1">PSII is composed of 1 copy each of membrane proteins PsbA, PsbB, PsbC, PsbD, PsbE, PsbF, PsbH, PsbI, PsbJ, PsbK, PsbL, PsbM, PsbT, PsbX, PsbY, PsbZ, Psb30/Ycf12, at least 3 peripheral proteins of the oxygen-evolving complex and a large number of cofactors. It forms dimeric complexes.</text>
</comment>
<comment type="subcellular location">
    <subcellularLocation>
        <location evidence="1">Plastid</location>
        <location evidence="1">Chloroplast thylakoid membrane</location>
        <topology evidence="1">Single-pass membrane protein</topology>
    </subcellularLocation>
</comment>
<comment type="similarity">
    <text evidence="1">Belongs to the PsbJ family.</text>
</comment>
<sequence length="42" mass="4286">MANTGVTGRIPLWLIGTVVGSLAIGLLAIFFYGSYVGLGSSL</sequence>
<accession>Q06SD5</accession>
<keyword id="KW-0150">Chloroplast</keyword>
<keyword id="KW-0472">Membrane</keyword>
<keyword id="KW-0602">Photosynthesis</keyword>
<keyword id="KW-0604">Photosystem II</keyword>
<keyword id="KW-0934">Plastid</keyword>
<keyword id="KW-0674">Reaction center</keyword>
<keyword id="KW-0793">Thylakoid</keyword>
<keyword id="KW-0812">Transmembrane</keyword>
<keyword id="KW-1133">Transmembrane helix</keyword>
<protein>
    <recommendedName>
        <fullName evidence="1">Photosystem II reaction center protein J</fullName>
        <shortName evidence="1">PSII-J</shortName>
    </recommendedName>
</protein>
<organism>
    <name type="scientific">Stigeoclonium helveticum</name>
    <name type="common">Green alga</name>
    <dbReference type="NCBI Taxonomy" id="55999"/>
    <lineage>
        <taxon>Eukaryota</taxon>
        <taxon>Viridiplantae</taxon>
        <taxon>Chlorophyta</taxon>
        <taxon>core chlorophytes</taxon>
        <taxon>Chlorophyceae</taxon>
        <taxon>OCC clade</taxon>
        <taxon>Chaetophorales</taxon>
        <taxon>Chaetophoraceae</taxon>
        <taxon>Stigeoclonium</taxon>
    </lineage>
</organism>
<feature type="chain" id="PRO_0000276118" description="Photosystem II reaction center protein J">
    <location>
        <begin position="1"/>
        <end position="42"/>
    </location>
</feature>
<feature type="transmembrane region" description="Helical" evidence="1">
    <location>
        <begin position="10"/>
        <end position="30"/>
    </location>
</feature>
<proteinExistence type="inferred from homology"/>